<keyword id="KW-1185">Reference proteome</keyword>
<name>Y069_SIFVH</name>
<gene>
    <name type="primary">SIFV0069</name>
</gene>
<organism>
    <name type="scientific">Sulfolobus islandicus filamentous virus (isolate Iceland/Hveragerdi)</name>
    <name type="common">SIFV</name>
    <dbReference type="NCBI Taxonomy" id="654908"/>
    <lineage>
        <taxon>Viruses</taxon>
        <taxon>Adnaviria</taxon>
        <taxon>Zilligvirae</taxon>
        <taxon>Taleaviricota</taxon>
        <taxon>Tokiviricetes</taxon>
        <taxon>Ligamenvirales</taxon>
        <taxon>Lipothrixviridae</taxon>
        <taxon>Betalipothrixvirus</taxon>
        <taxon>Sulfolobus islandicus filamentous virus</taxon>
    </lineage>
</organism>
<dbReference type="EMBL" id="AF440571">
    <property type="protein sequence ID" value="AAL27778.1"/>
    <property type="molecule type" value="Genomic_DNA"/>
</dbReference>
<dbReference type="RefSeq" id="NP_445732.1">
    <property type="nucleotide sequence ID" value="NC_003214.2"/>
</dbReference>
<dbReference type="SMR" id="Q914G3"/>
<dbReference type="GeneID" id="922334"/>
<dbReference type="KEGG" id="vg:922334"/>
<dbReference type="Proteomes" id="UP000007017">
    <property type="component" value="Segment"/>
</dbReference>
<sequence length="62" mass="6790">MGTIEDVVEFLRFNGVIKGNTVSYNGIIHYAESVSIILGLSPEESIKQLLSYLNKNGYVVVG</sequence>
<proteinExistence type="predicted"/>
<feature type="chain" id="PRO_0000385429" description="Uncharacterized protein 69">
    <location>
        <begin position="1"/>
        <end position="62"/>
    </location>
</feature>
<accession>Q914G3</accession>
<organismHost>
    <name type="scientific">Saccharolobus islandicus</name>
    <name type="common">Sulfolobus islandicus</name>
    <dbReference type="NCBI Taxonomy" id="43080"/>
</organismHost>
<protein>
    <recommendedName>
        <fullName>Uncharacterized protein 69</fullName>
    </recommendedName>
</protein>
<reference key="1">
    <citation type="journal article" date="2000" name="Virology">
        <title>A novel lipothrixvirus, SIFV, of the extremely thermophilic crenarchaeon Sulfolobus.</title>
        <authorList>
            <person name="Arnold H.P."/>
            <person name="Zillig W."/>
            <person name="Ziese U."/>
            <person name="Holz I."/>
            <person name="Crosby M."/>
            <person name="Utterback T."/>
            <person name="Weidmann J.F."/>
            <person name="Umayam L.A."/>
            <person name="Teffera K."/>
            <person name="Kristjanson J.K."/>
            <person name="Klenk H.P."/>
            <person name="Nelson K.E."/>
            <person name="Fraser C.M."/>
        </authorList>
    </citation>
    <scope>NUCLEOTIDE SEQUENCE [GENOMIC DNA]</scope>
</reference>